<organism>
    <name type="scientific">Saccharophagus degradans (strain 2-40 / ATCC 43961 / DSM 17024)</name>
    <dbReference type="NCBI Taxonomy" id="203122"/>
    <lineage>
        <taxon>Bacteria</taxon>
        <taxon>Pseudomonadati</taxon>
        <taxon>Pseudomonadota</taxon>
        <taxon>Gammaproteobacteria</taxon>
        <taxon>Cellvibrionales</taxon>
        <taxon>Cellvibrionaceae</taxon>
        <taxon>Saccharophagus</taxon>
    </lineage>
</organism>
<accession>Q21FP7</accession>
<reference key="1">
    <citation type="journal article" date="2008" name="PLoS Genet.">
        <title>Complete genome sequence of the complex carbohydrate-degrading marine bacterium, Saccharophagus degradans strain 2-40 T.</title>
        <authorList>
            <person name="Weiner R.M."/>
            <person name="Taylor L.E. II"/>
            <person name="Henrissat B."/>
            <person name="Hauser L."/>
            <person name="Land M."/>
            <person name="Coutinho P.M."/>
            <person name="Rancurel C."/>
            <person name="Saunders E.H."/>
            <person name="Longmire A.G."/>
            <person name="Zhang H."/>
            <person name="Bayer E.A."/>
            <person name="Gilbert H.J."/>
            <person name="Larimer F."/>
            <person name="Zhulin I.B."/>
            <person name="Ekborg N.A."/>
            <person name="Lamed R."/>
            <person name="Richardson P.M."/>
            <person name="Borovok I."/>
            <person name="Hutcheson S."/>
        </authorList>
    </citation>
    <scope>NUCLEOTIDE SEQUENCE [LARGE SCALE GENOMIC DNA]</scope>
    <source>
        <strain>2-40 / ATCC 43961 / DSM 17024</strain>
    </source>
</reference>
<feature type="chain" id="PRO_0000301229" description="Sec-independent protein translocase protein TatB">
    <location>
        <begin position="1"/>
        <end position="169"/>
    </location>
</feature>
<feature type="transmembrane region" description="Helical" evidence="1">
    <location>
        <begin position="1"/>
        <end position="21"/>
    </location>
</feature>
<feature type="region of interest" description="Disordered" evidence="2">
    <location>
        <begin position="98"/>
        <end position="169"/>
    </location>
</feature>
<feature type="compositionally biased region" description="Basic and acidic residues" evidence="2">
    <location>
        <begin position="134"/>
        <end position="143"/>
    </location>
</feature>
<feature type="compositionally biased region" description="Polar residues" evidence="2">
    <location>
        <begin position="146"/>
        <end position="169"/>
    </location>
</feature>
<dbReference type="EMBL" id="CP000282">
    <property type="protein sequence ID" value="ABD82482.1"/>
    <property type="molecule type" value="Genomic_DNA"/>
</dbReference>
<dbReference type="RefSeq" id="WP_011469698.1">
    <property type="nucleotide sequence ID" value="NC_007912.1"/>
</dbReference>
<dbReference type="SMR" id="Q21FP7"/>
<dbReference type="STRING" id="203122.Sde_3225"/>
<dbReference type="GeneID" id="98615708"/>
<dbReference type="KEGG" id="sde:Sde_3225"/>
<dbReference type="eggNOG" id="COG1826">
    <property type="taxonomic scope" value="Bacteria"/>
</dbReference>
<dbReference type="HOGENOM" id="CLU_086034_1_1_6"/>
<dbReference type="OrthoDB" id="9816005at2"/>
<dbReference type="Proteomes" id="UP000001947">
    <property type="component" value="Chromosome"/>
</dbReference>
<dbReference type="GO" id="GO:0033281">
    <property type="term" value="C:TAT protein transport complex"/>
    <property type="evidence" value="ECO:0007669"/>
    <property type="project" value="UniProtKB-UniRule"/>
</dbReference>
<dbReference type="GO" id="GO:0008320">
    <property type="term" value="F:protein transmembrane transporter activity"/>
    <property type="evidence" value="ECO:0007669"/>
    <property type="project" value="UniProtKB-UniRule"/>
</dbReference>
<dbReference type="GO" id="GO:0043953">
    <property type="term" value="P:protein transport by the Tat complex"/>
    <property type="evidence" value="ECO:0007669"/>
    <property type="project" value="UniProtKB-UniRule"/>
</dbReference>
<dbReference type="Gene3D" id="1.20.5.3310">
    <property type="match status" value="1"/>
</dbReference>
<dbReference type="HAMAP" id="MF_00237">
    <property type="entry name" value="TatB"/>
    <property type="match status" value="1"/>
</dbReference>
<dbReference type="InterPro" id="IPR003369">
    <property type="entry name" value="TatA/B/E"/>
</dbReference>
<dbReference type="InterPro" id="IPR018448">
    <property type="entry name" value="TatB"/>
</dbReference>
<dbReference type="NCBIfam" id="TIGR01410">
    <property type="entry name" value="tatB"/>
    <property type="match status" value="1"/>
</dbReference>
<dbReference type="PANTHER" id="PTHR33162">
    <property type="entry name" value="SEC-INDEPENDENT PROTEIN TRANSLOCASE PROTEIN TATA, CHLOROPLASTIC"/>
    <property type="match status" value="1"/>
</dbReference>
<dbReference type="PANTHER" id="PTHR33162:SF1">
    <property type="entry name" value="SEC-INDEPENDENT PROTEIN TRANSLOCASE PROTEIN TATA, CHLOROPLASTIC"/>
    <property type="match status" value="1"/>
</dbReference>
<dbReference type="Pfam" id="PF02416">
    <property type="entry name" value="TatA_B_E"/>
    <property type="match status" value="1"/>
</dbReference>
<dbReference type="PRINTS" id="PR01506">
    <property type="entry name" value="TATBPROTEIN"/>
</dbReference>
<name>TATB_SACD2</name>
<comment type="function">
    <text evidence="1">Part of the twin-arginine translocation (Tat) system that transports large folded proteins containing a characteristic twin-arginine motif in their signal peptide across membranes. Together with TatC, TatB is part of a receptor directly interacting with Tat signal peptides. TatB may form an oligomeric binding site that transiently accommodates folded Tat precursor proteins before their translocation.</text>
</comment>
<comment type="subunit">
    <text evidence="1">The Tat system comprises two distinct complexes: a TatABC complex, containing multiple copies of TatA, TatB and TatC subunits, and a separate TatA complex, containing only TatA subunits. Substrates initially bind to the TatABC complex, which probably triggers association of the separate TatA complex to form the active translocon.</text>
</comment>
<comment type="subcellular location">
    <subcellularLocation>
        <location evidence="1">Cell inner membrane</location>
        <topology evidence="1">Single-pass membrane protein</topology>
    </subcellularLocation>
</comment>
<comment type="similarity">
    <text evidence="1">Belongs to the TatB family.</text>
</comment>
<proteinExistence type="inferred from homology"/>
<protein>
    <recommendedName>
        <fullName evidence="1">Sec-independent protein translocase protein TatB</fullName>
    </recommendedName>
</protein>
<sequence>MFDIGFLELAVIAVIGLIVIGPERLPEAVRSGATWMAKIRKMMRDTRAEIEVQIGADEIRRELHNEQVMKSLEALKVTKDDIQQHILDADRKMMLEQEAEEAKLQTPVSRRVAGDDPTLGTDDNVFTDPSYAHPPEEPSKVEADTSAETPQANNQDQQPTTKTEPANDR</sequence>
<keyword id="KW-0997">Cell inner membrane</keyword>
<keyword id="KW-1003">Cell membrane</keyword>
<keyword id="KW-0472">Membrane</keyword>
<keyword id="KW-0653">Protein transport</keyword>
<keyword id="KW-1185">Reference proteome</keyword>
<keyword id="KW-0811">Translocation</keyword>
<keyword id="KW-0812">Transmembrane</keyword>
<keyword id="KW-1133">Transmembrane helix</keyword>
<keyword id="KW-0813">Transport</keyword>
<evidence type="ECO:0000255" key="1">
    <source>
        <dbReference type="HAMAP-Rule" id="MF_00237"/>
    </source>
</evidence>
<evidence type="ECO:0000256" key="2">
    <source>
        <dbReference type="SAM" id="MobiDB-lite"/>
    </source>
</evidence>
<gene>
    <name evidence="1" type="primary">tatB</name>
    <name type="ordered locus">Sde_3225</name>
</gene>